<sequence>MVEQIKDKLGRPIRDLRLSVTDRCNFRCDYCMPKEVFGDDFVFLPKNELLTFDEMARIAKVYAELGVKKIRITGGEPLMRRDLDVLIAKLNQIDGIEDIGLTTNGLLLKKHGQELYDAGLRRINVSLDAIDDTLFQSINNRNIKATTILEQIDYATSIGLNVKVNVVIQKGINDDQIIPMLEYFKDKHIEIRFIEFMDVGNDNGWDFSKVVTKDEMLTMIEQHFEIDPVEPKYFGEVAKYYRHKDNGVQFGLITSVSQSFCSTCTRARLSSDGKFYGCLFATVDGFNVKAFIRSGVTDEELKEQFKALWQIRDDRYSDERTAQTVANRQRKKINMNYIGG</sequence>
<dbReference type="EC" id="4.1.99.22" evidence="1"/>
<dbReference type="EMBL" id="AP009324">
    <property type="protein sequence ID" value="BAF79135.1"/>
    <property type="molecule type" value="Genomic_DNA"/>
</dbReference>
<dbReference type="RefSeq" id="WP_001838204.1">
    <property type="nucleotide sequence ID" value="NC_009782.1"/>
</dbReference>
<dbReference type="SMR" id="A7X5J1"/>
<dbReference type="KEGG" id="saw:SAHV_2252"/>
<dbReference type="HOGENOM" id="CLU_009273_0_1_9"/>
<dbReference type="UniPathway" id="UPA00344"/>
<dbReference type="GO" id="GO:0051539">
    <property type="term" value="F:4 iron, 4 sulfur cluster binding"/>
    <property type="evidence" value="ECO:0007669"/>
    <property type="project" value="UniProtKB-UniRule"/>
</dbReference>
<dbReference type="GO" id="GO:0061799">
    <property type="term" value="F:cyclic pyranopterin monophosphate synthase activity"/>
    <property type="evidence" value="ECO:0007669"/>
    <property type="project" value="TreeGrafter"/>
</dbReference>
<dbReference type="GO" id="GO:0061798">
    <property type="term" value="F:GTP 3',8'-cyclase activity"/>
    <property type="evidence" value="ECO:0007669"/>
    <property type="project" value="UniProtKB-UniRule"/>
</dbReference>
<dbReference type="GO" id="GO:0005525">
    <property type="term" value="F:GTP binding"/>
    <property type="evidence" value="ECO:0007669"/>
    <property type="project" value="UniProtKB-UniRule"/>
</dbReference>
<dbReference type="GO" id="GO:0046872">
    <property type="term" value="F:metal ion binding"/>
    <property type="evidence" value="ECO:0007669"/>
    <property type="project" value="UniProtKB-KW"/>
</dbReference>
<dbReference type="GO" id="GO:1904047">
    <property type="term" value="F:S-adenosyl-L-methionine binding"/>
    <property type="evidence" value="ECO:0007669"/>
    <property type="project" value="UniProtKB-UniRule"/>
</dbReference>
<dbReference type="GO" id="GO:0006777">
    <property type="term" value="P:Mo-molybdopterin cofactor biosynthetic process"/>
    <property type="evidence" value="ECO:0007669"/>
    <property type="project" value="UniProtKB-UniRule"/>
</dbReference>
<dbReference type="CDD" id="cd01335">
    <property type="entry name" value="Radical_SAM"/>
    <property type="match status" value="1"/>
</dbReference>
<dbReference type="CDD" id="cd21117">
    <property type="entry name" value="Twitch_MoaA"/>
    <property type="match status" value="1"/>
</dbReference>
<dbReference type="Gene3D" id="3.20.20.70">
    <property type="entry name" value="Aldolase class I"/>
    <property type="match status" value="1"/>
</dbReference>
<dbReference type="HAMAP" id="MF_01225_B">
    <property type="entry name" value="MoaA_B"/>
    <property type="match status" value="1"/>
</dbReference>
<dbReference type="InterPro" id="IPR013785">
    <property type="entry name" value="Aldolase_TIM"/>
</dbReference>
<dbReference type="InterPro" id="IPR006638">
    <property type="entry name" value="Elp3/MiaA/NifB-like_rSAM"/>
</dbReference>
<dbReference type="InterPro" id="IPR013483">
    <property type="entry name" value="MoaA"/>
</dbReference>
<dbReference type="InterPro" id="IPR000385">
    <property type="entry name" value="MoaA_NifB_PqqE_Fe-S-bd_CS"/>
</dbReference>
<dbReference type="InterPro" id="IPR010505">
    <property type="entry name" value="MoaA_twitch"/>
</dbReference>
<dbReference type="InterPro" id="IPR050105">
    <property type="entry name" value="MoCo_biosynth_MoaA/MoaC"/>
</dbReference>
<dbReference type="InterPro" id="IPR007197">
    <property type="entry name" value="rSAM"/>
</dbReference>
<dbReference type="NCBIfam" id="TIGR02666">
    <property type="entry name" value="moaA"/>
    <property type="match status" value="1"/>
</dbReference>
<dbReference type="PANTHER" id="PTHR22960:SF0">
    <property type="entry name" value="MOLYBDENUM COFACTOR BIOSYNTHESIS PROTEIN 1"/>
    <property type="match status" value="1"/>
</dbReference>
<dbReference type="PANTHER" id="PTHR22960">
    <property type="entry name" value="MOLYBDOPTERIN COFACTOR SYNTHESIS PROTEIN A"/>
    <property type="match status" value="1"/>
</dbReference>
<dbReference type="Pfam" id="PF06463">
    <property type="entry name" value="Mob_synth_C"/>
    <property type="match status" value="1"/>
</dbReference>
<dbReference type="Pfam" id="PF04055">
    <property type="entry name" value="Radical_SAM"/>
    <property type="match status" value="1"/>
</dbReference>
<dbReference type="SFLD" id="SFLDF00276">
    <property type="entry name" value="cyclic_pyranopterin_phosphate"/>
    <property type="match status" value="1"/>
</dbReference>
<dbReference type="SFLD" id="SFLDG01072">
    <property type="entry name" value="dehydrogenase_like"/>
    <property type="match status" value="1"/>
</dbReference>
<dbReference type="SMART" id="SM00729">
    <property type="entry name" value="Elp3"/>
    <property type="match status" value="1"/>
</dbReference>
<dbReference type="SUPFAM" id="SSF102114">
    <property type="entry name" value="Radical SAM enzymes"/>
    <property type="match status" value="1"/>
</dbReference>
<dbReference type="PROSITE" id="PS01305">
    <property type="entry name" value="MOAA_NIFB_PQQE"/>
    <property type="match status" value="1"/>
</dbReference>
<dbReference type="PROSITE" id="PS51918">
    <property type="entry name" value="RADICAL_SAM"/>
    <property type="match status" value="1"/>
</dbReference>
<feature type="chain" id="PRO_1000054228" description="GTP 3',8-cyclase">
    <location>
        <begin position="1"/>
        <end position="340"/>
    </location>
</feature>
<feature type="domain" description="Radical SAM core" evidence="2">
    <location>
        <begin position="8"/>
        <end position="227"/>
    </location>
</feature>
<feature type="binding site" evidence="1">
    <location>
        <position position="17"/>
    </location>
    <ligand>
        <name>GTP</name>
        <dbReference type="ChEBI" id="CHEBI:37565"/>
    </ligand>
</feature>
<feature type="binding site" evidence="1">
    <location>
        <position position="24"/>
    </location>
    <ligand>
        <name>[4Fe-4S] cluster</name>
        <dbReference type="ChEBI" id="CHEBI:49883"/>
        <label>1</label>
        <note>4Fe-4S-S-AdoMet</note>
    </ligand>
</feature>
<feature type="binding site" evidence="1">
    <location>
        <position position="28"/>
    </location>
    <ligand>
        <name>[4Fe-4S] cluster</name>
        <dbReference type="ChEBI" id="CHEBI:49883"/>
        <label>1</label>
        <note>4Fe-4S-S-AdoMet</note>
    </ligand>
</feature>
<feature type="binding site" evidence="1">
    <location>
        <position position="30"/>
    </location>
    <ligand>
        <name>S-adenosyl-L-methionine</name>
        <dbReference type="ChEBI" id="CHEBI:59789"/>
    </ligand>
</feature>
<feature type="binding site" evidence="1">
    <location>
        <position position="31"/>
    </location>
    <ligand>
        <name>[4Fe-4S] cluster</name>
        <dbReference type="ChEBI" id="CHEBI:49883"/>
        <label>1</label>
        <note>4Fe-4S-S-AdoMet</note>
    </ligand>
</feature>
<feature type="binding site" evidence="1">
    <location>
        <position position="71"/>
    </location>
    <ligand>
        <name>GTP</name>
        <dbReference type="ChEBI" id="CHEBI:37565"/>
    </ligand>
</feature>
<feature type="binding site" evidence="1">
    <location>
        <position position="75"/>
    </location>
    <ligand>
        <name>S-adenosyl-L-methionine</name>
        <dbReference type="ChEBI" id="CHEBI:59789"/>
    </ligand>
</feature>
<feature type="binding site" evidence="1">
    <location>
        <position position="102"/>
    </location>
    <ligand>
        <name>GTP</name>
        <dbReference type="ChEBI" id="CHEBI:37565"/>
    </ligand>
</feature>
<feature type="binding site" evidence="1">
    <location>
        <position position="126"/>
    </location>
    <ligand>
        <name>S-adenosyl-L-methionine</name>
        <dbReference type="ChEBI" id="CHEBI:59789"/>
    </ligand>
</feature>
<feature type="binding site" evidence="1">
    <location>
        <position position="163"/>
    </location>
    <ligand>
        <name>GTP</name>
        <dbReference type="ChEBI" id="CHEBI:37565"/>
    </ligand>
</feature>
<feature type="binding site" evidence="1">
    <location>
        <position position="197"/>
    </location>
    <ligand>
        <name>S-adenosyl-L-methionine</name>
        <dbReference type="ChEBI" id="CHEBI:59789"/>
    </ligand>
</feature>
<feature type="binding site" evidence="1">
    <location>
        <position position="261"/>
    </location>
    <ligand>
        <name>[4Fe-4S] cluster</name>
        <dbReference type="ChEBI" id="CHEBI:49883"/>
        <label>2</label>
        <note>4Fe-4S-substrate</note>
    </ligand>
</feature>
<feature type="binding site" evidence="1">
    <location>
        <position position="264"/>
    </location>
    <ligand>
        <name>[4Fe-4S] cluster</name>
        <dbReference type="ChEBI" id="CHEBI:49883"/>
        <label>2</label>
        <note>4Fe-4S-substrate</note>
    </ligand>
</feature>
<feature type="binding site" evidence="1">
    <location>
        <begin position="266"/>
        <end position="268"/>
    </location>
    <ligand>
        <name>GTP</name>
        <dbReference type="ChEBI" id="CHEBI:37565"/>
    </ligand>
</feature>
<feature type="binding site" evidence="1">
    <location>
        <position position="278"/>
    </location>
    <ligand>
        <name>[4Fe-4S] cluster</name>
        <dbReference type="ChEBI" id="CHEBI:49883"/>
        <label>2</label>
        <note>4Fe-4S-substrate</note>
    </ligand>
</feature>
<keyword id="KW-0004">4Fe-4S</keyword>
<keyword id="KW-0342">GTP-binding</keyword>
<keyword id="KW-0408">Iron</keyword>
<keyword id="KW-0411">Iron-sulfur</keyword>
<keyword id="KW-0456">Lyase</keyword>
<keyword id="KW-0479">Metal-binding</keyword>
<keyword id="KW-0501">Molybdenum cofactor biosynthesis</keyword>
<keyword id="KW-0547">Nucleotide-binding</keyword>
<keyword id="KW-0949">S-adenosyl-L-methionine</keyword>
<proteinExistence type="inferred from homology"/>
<organism>
    <name type="scientific">Staphylococcus aureus (strain Mu3 / ATCC 700698)</name>
    <dbReference type="NCBI Taxonomy" id="418127"/>
    <lineage>
        <taxon>Bacteria</taxon>
        <taxon>Bacillati</taxon>
        <taxon>Bacillota</taxon>
        <taxon>Bacilli</taxon>
        <taxon>Bacillales</taxon>
        <taxon>Staphylococcaceae</taxon>
        <taxon>Staphylococcus</taxon>
    </lineage>
</organism>
<name>MOAA_STAA1</name>
<protein>
    <recommendedName>
        <fullName evidence="1">GTP 3',8-cyclase</fullName>
        <ecNumber evidence="1">4.1.99.22</ecNumber>
    </recommendedName>
    <alternativeName>
        <fullName evidence="1">Molybdenum cofactor biosynthesis protein A</fullName>
    </alternativeName>
</protein>
<evidence type="ECO:0000255" key="1">
    <source>
        <dbReference type="HAMAP-Rule" id="MF_01225"/>
    </source>
</evidence>
<evidence type="ECO:0000255" key="2">
    <source>
        <dbReference type="PROSITE-ProRule" id="PRU01266"/>
    </source>
</evidence>
<accession>A7X5J1</accession>
<gene>
    <name evidence="1" type="primary">moaA</name>
    <name type="ordered locus">SAHV_2252</name>
</gene>
<comment type="function">
    <text evidence="1">Catalyzes the cyclization of GTP to (8S)-3',8-cyclo-7,8-dihydroguanosine 5'-triphosphate.</text>
</comment>
<comment type="catalytic activity">
    <reaction evidence="1">
        <text>GTP + AH2 + S-adenosyl-L-methionine = (8S)-3',8-cyclo-7,8-dihydroguanosine 5'-triphosphate + 5'-deoxyadenosine + L-methionine + A + H(+)</text>
        <dbReference type="Rhea" id="RHEA:49576"/>
        <dbReference type="ChEBI" id="CHEBI:13193"/>
        <dbReference type="ChEBI" id="CHEBI:15378"/>
        <dbReference type="ChEBI" id="CHEBI:17319"/>
        <dbReference type="ChEBI" id="CHEBI:17499"/>
        <dbReference type="ChEBI" id="CHEBI:37565"/>
        <dbReference type="ChEBI" id="CHEBI:57844"/>
        <dbReference type="ChEBI" id="CHEBI:59789"/>
        <dbReference type="ChEBI" id="CHEBI:131766"/>
        <dbReference type="EC" id="4.1.99.22"/>
    </reaction>
</comment>
<comment type="cofactor">
    <cofactor evidence="1">
        <name>[4Fe-4S] cluster</name>
        <dbReference type="ChEBI" id="CHEBI:49883"/>
    </cofactor>
    <text evidence="1">Binds 2 [4Fe-4S] clusters. Binds 1 [4Fe-4S] cluster coordinated with 3 cysteines and an exchangeable S-adenosyl-L-methionine and 1 [4Fe-4S] cluster coordinated with 3 cysteines and the GTP-derived substrate.</text>
</comment>
<comment type="pathway">
    <text evidence="1">Cofactor biosynthesis; molybdopterin biosynthesis.</text>
</comment>
<comment type="subunit">
    <text evidence="1">Monomer and homodimer.</text>
</comment>
<comment type="similarity">
    <text evidence="1">Belongs to the radical SAM superfamily. MoaA family.</text>
</comment>
<reference key="1">
    <citation type="journal article" date="2008" name="Antimicrob. Agents Chemother.">
        <title>Mutated response regulator graR is responsible for phenotypic conversion of Staphylococcus aureus from heterogeneous vancomycin-intermediate resistance to vancomycin-intermediate resistance.</title>
        <authorList>
            <person name="Neoh H.-M."/>
            <person name="Cui L."/>
            <person name="Yuzawa H."/>
            <person name="Takeuchi F."/>
            <person name="Matsuo M."/>
            <person name="Hiramatsu K."/>
        </authorList>
    </citation>
    <scope>NUCLEOTIDE SEQUENCE [LARGE SCALE GENOMIC DNA]</scope>
    <source>
        <strain>Mu3 / ATCC 700698</strain>
    </source>
</reference>